<evidence type="ECO:0000250" key="1"/>
<evidence type="ECO:0000250" key="2">
    <source>
        <dbReference type="UniProtKB" id="P04905"/>
    </source>
</evidence>
<evidence type="ECO:0000250" key="3">
    <source>
        <dbReference type="UniProtKB" id="P09488"/>
    </source>
</evidence>
<evidence type="ECO:0000269" key="4">
    <source>
    </source>
</evidence>
<evidence type="ECO:0000269" key="5">
    <source ref="8"/>
</evidence>
<evidence type="ECO:0000305" key="6"/>
<evidence type="ECO:0000312" key="7">
    <source>
        <dbReference type="MGI" id="MGI:95860"/>
    </source>
</evidence>
<evidence type="ECO:0007744" key="8">
    <source>
    </source>
</evidence>
<organism>
    <name type="scientific">Mus musculus</name>
    <name type="common">Mouse</name>
    <dbReference type="NCBI Taxonomy" id="10090"/>
    <lineage>
        <taxon>Eukaryota</taxon>
        <taxon>Metazoa</taxon>
        <taxon>Chordata</taxon>
        <taxon>Craniata</taxon>
        <taxon>Vertebrata</taxon>
        <taxon>Euteleostomi</taxon>
        <taxon>Mammalia</taxon>
        <taxon>Eutheria</taxon>
        <taxon>Euarchontoglires</taxon>
        <taxon>Glires</taxon>
        <taxon>Rodentia</taxon>
        <taxon>Myomorpha</taxon>
        <taxon>Muroidea</taxon>
        <taxon>Muridae</taxon>
        <taxon>Murinae</taxon>
        <taxon>Mus</taxon>
        <taxon>Mus</taxon>
    </lineage>
</organism>
<protein>
    <recommendedName>
        <fullName evidence="6">Glutathione S-transferase Mu 1</fullName>
        <ecNumber evidence="3">2.5.1.18</ecNumber>
    </recommendedName>
    <alternativeName>
        <fullName>GST 1-1</fullName>
    </alternativeName>
    <alternativeName>
        <fullName>GST class-mu 1</fullName>
    </alternativeName>
    <alternativeName>
        <fullName>Glutathione S-transferase GT8.7</fullName>
    </alternativeName>
    <alternativeName>
        <fullName>pmGT10</fullName>
    </alternativeName>
</protein>
<gene>
    <name evidence="7" type="primary">Gstm1</name>
</gene>
<feature type="initiator methionine" description="Removed" evidence="5">
    <location>
        <position position="1"/>
    </location>
</feature>
<feature type="chain" id="PRO_0000185826" description="Glutathione S-transferase Mu 1">
    <location>
        <begin position="2"/>
        <end position="218"/>
    </location>
</feature>
<feature type="domain" description="GST N-terminal">
    <location>
        <begin position="2"/>
        <end position="88"/>
    </location>
</feature>
<feature type="domain" description="GST C-terminal">
    <location>
        <begin position="90"/>
        <end position="208"/>
    </location>
</feature>
<feature type="binding site" evidence="3">
    <location>
        <begin position="7"/>
        <end position="8"/>
    </location>
    <ligand>
        <name>glutathione</name>
        <dbReference type="ChEBI" id="CHEBI:57925"/>
    </ligand>
</feature>
<feature type="binding site" evidence="3">
    <location>
        <begin position="43"/>
        <end position="46"/>
    </location>
    <ligand>
        <name>glutathione</name>
        <dbReference type="ChEBI" id="CHEBI:57925"/>
    </ligand>
</feature>
<feature type="binding site" evidence="3">
    <location>
        <position position="50"/>
    </location>
    <ligand>
        <name>glutathione</name>
        <dbReference type="ChEBI" id="CHEBI:57925"/>
    </ligand>
</feature>
<feature type="binding site" evidence="3">
    <location>
        <begin position="59"/>
        <end position="60"/>
    </location>
    <ligand>
        <name>glutathione</name>
        <dbReference type="ChEBI" id="CHEBI:57925"/>
    </ligand>
</feature>
<feature type="binding site" evidence="3">
    <location>
        <begin position="72"/>
        <end position="73"/>
    </location>
    <ligand>
        <name>glutathione</name>
        <dbReference type="ChEBI" id="CHEBI:57925"/>
    </ligand>
</feature>
<feature type="binding site" evidence="1">
    <location>
        <position position="116"/>
    </location>
    <ligand>
        <name>substrate</name>
    </ligand>
</feature>
<feature type="modified residue" description="Phosphothreonine" evidence="8">
    <location>
        <position position="34"/>
    </location>
</feature>
<feature type="modified residue" description="Phosphoserine" evidence="2">
    <location>
        <position position="67"/>
    </location>
</feature>
<feature type="modified residue" description="Phosphoserine" evidence="2">
    <location>
        <position position="210"/>
    </location>
</feature>
<dbReference type="EC" id="2.5.1.18" evidence="3"/>
<dbReference type="EMBL" id="J03952">
    <property type="protein sequence ID" value="AAA37747.1"/>
    <property type="molecule type" value="mRNA"/>
</dbReference>
<dbReference type="EMBL" id="J04632">
    <property type="protein sequence ID" value="AAA37705.1"/>
    <property type="molecule type" value="mRNA"/>
</dbReference>
<dbReference type="EMBL" id="L13448">
    <property type="status" value="NOT_ANNOTATED_CDS"/>
    <property type="molecule type" value="Genomic_DNA"/>
</dbReference>
<dbReference type="EMBL" id="AC079042">
    <property type="status" value="NOT_ANNOTATED_CDS"/>
    <property type="molecule type" value="Genomic_DNA"/>
</dbReference>
<dbReference type="EMBL" id="AL671877">
    <property type="status" value="NOT_ANNOTATED_CDS"/>
    <property type="molecule type" value="Genomic_DNA"/>
</dbReference>
<dbReference type="EMBL" id="BC003822">
    <property type="protein sequence ID" value="AAH03822.1"/>
    <property type="molecule type" value="mRNA"/>
</dbReference>
<dbReference type="EMBL" id="BC046758">
    <property type="protein sequence ID" value="AAH46758.1"/>
    <property type="molecule type" value="mRNA"/>
</dbReference>
<dbReference type="EMBL" id="BC091763">
    <property type="protein sequence ID" value="AAH91763.1"/>
    <property type="molecule type" value="mRNA"/>
</dbReference>
<dbReference type="CCDS" id="CCDS17747.1"/>
<dbReference type="PIR" id="H24735">
    <property type="entry name" value="H24735"/>
</dbReference>
<dbReference type="PIR" id="S30373">
    <property type="entry name" value="S30373"/>
</dbReference>
<dbReference type="PIR" id="S33860">
    <property type="entry name" value="S33860"/>
</dbReference>
<dbReference type="RefSeq" id="NP_034488.1">
    <property type="nucleotide sequence ID" value="NM_010358.5"/>
</dbReference>
<dbReference type="SMR" id="P10649"/>
<dbReference type="BioGRID" id="200094">
    <property type="interactions" value="16"/>
</dbReference>
<dbReference type="FunCoup" id="P10649">
    <property type="interactions" value="299"/>
</dbReference>
<dbReference type="IntAct" id="P10649">
    <property type="interactions" value="3"/>
</dbReference>
<dbReference type="MINT" id="P10649"/>
<dbReference type="STRING" id="10090.ENSMUSP00000004140"/>
<dbReference type="BindingDB" id="P10649"/>
<dbReference type="ChEMBL" id="CHEMBL3722"/>
<dbReference type="GlyGen" id="P10649">
    <property type="glycosylation" value="1 site, 1 O-linked glycan (1 site)"/>
</dbReference>
<dbReference type="iPTMnet" id="P10649"/>
<dbReference type="MetOSite" id="P10649"/>
<dbReference type="PhosphoSitePlus" id="P10649"/>
<dbReference type="SwissPalm" id="P10649"/>
<dbReference type="REPRODUCTION-2DPAGE" id="P10649"/>
<dbReference type="CPTAC" id="non-CPTAC-3574"/>
<dbReference type="jPOST" id="P10649"/>
<dbReference type="PaxDb" id="10090-ENSMUSP00000004140"/>
<dbReference type="PeptideAtlas" id="P10649"/>
<dbReference type="ProteomicsDB" id="271179"/>
<dbReference type="Pumba" id="P10649"/>
<dbReference type="DNASU" id="14862"/>
<dbReference type="Ensembl" id="ENSMUST00000004140.11">
    <property type="protein sequence ID" value="ENSMUSP00000004140.5"/>
    <property type="gene ID" value="ENSMUSG00000058135.13"/>
</dbReference>
<dbReference type="GeneID" id="14862"/>
<dbReference type="KEGG" id="mmu:14862"/>
<dbReference type="UCSC" id="uc008qxx.2">
    <property type="organism name" value="mouse"/>
</dbReference>
<dbReference type="AGR" id="MGI:95860"/>
<dbReference type="CTD" id="2944"/>
<dbReference type="MGI" id="MGI:95860">
    <property type="gene designation" value="Gstm1"/>
</dbReference>
<dbReference type="VEuPathDB" id="HostDB:ENSMUSG00000058135"/>
<dbReference type="eggNOG" id="KOG1695">
    <property type="taxonomic scope" value="Eukaryota"/>
</dbReference>
<dbReference type="GeneTree" id="ENSGT00940000160258"/>
<dbReference type="HOGENOM" id="CLU_039475_2_0_1"/>
<dbReference type="InParanoid" id="P10649"/>
<dbReference type="OMA" id="SIDPHAN"/>
<dbReference type="OrthoDB" id="4951845at2759"/>
<dbReference type="PhylomeDB" id="P10649"/>
<dbReference type="TreeFam" id="TF353040"/>
<dbReference type="Reactome" id="R-MMU-156590">
    <property type="pathway name" value="Glutathione conjugation"/>
</dbReference>
<dbReference type="BioGRID-ORCS" id="14862">
    <property type="hits" value="2 hits in 76 CRISPR screens"/>
</dbReference>
<dbReference type="ChiTaRS" id="Gstm1">
    <property type="organism name" value="mouse"/>
</dbReference>
<dbReference type="PRO" id="PR:P10649"/>
<dbReference type="Proteomes" id="UP000000589">
    <property type="component" value="Chromosome 3"/>
</dbReference>
<dbReference type="RNAct" id="P10649">
    <property type="molecule type" value="protein"/>
</dbReference>
<dbReference type="Bgee" id="ENSMUSG00000058135">
    <property type="expression patterns" value="Expressed in urinary bladder urothelium and 260 other cell types or tissues"/>
</dbReference>
<dbReference type="ExpressionAtlas" id="P10649">
    <property type="expression patterns" value="baseline and differential"/>
</dbReference>
<dbReference type="GO" id="GO:0005829">
    <property type="term" value="C:cytosol"/>
    <property type="evidence" value="ECO:0000314"/>
    <property type="project" value="FlyBase"/>
</dbReference>
<dbReference type="GO" id="GO:0005739">
    <property type="term" value="C:mitochondrion"/>
    <property type="evidence" value="ECO:0000314"/>
    <property type="project" value="FlyBase"/>
</dbReference>
<dbReference type="GO" id="GO:0043209">
    <property type="term" value="C:myelin sheath"/>
    <property type="evidence" value="ECO:0007005"/>
    <property type="project" value="UniProtKB"/>
</dbReference>
<dbReference type="GO" id="GO:0004364">
    <property type="term" value="F:glutathione transferase activity"/>
    <property type="evidence" value="ECO:0000250"/>
    <property type="project" value="UniProtKB"/>
</dbReference>
<dbReference type="GO" id="GO:0042802">
    <property type="term" value="F:identical protein binding"/>
    <property type="evidence" value="ECO:0000353"/>
    <property type="project" value="MGI"/>
</dbReference>
<dbReference type="GO" id="GO:0071466">
    <property type="term" value="P:cellular response to xenobiotic stimulus"/>
    <property type="evidence" value="ECO:0000314"/>
    <property type="project" value="MGI"/>
</dbReference>
<dbReference type="GO" id="GO:1901687">
    <property type="term" value="P:glutathione derivative biosynthetic process"/>
    <property type="evidence" value="ECO:0000250"/>
    <property type="project" value="UniProtKB"/>
</dbReference>
<dbReference type="GO" id="GO:0051122">
    <property type="term" value="P:hepoxilin biosynthetic process"/>
    <property type="evidence" value="ECO:0000250"/>
    <property type="project" value="UniProtKB"/>
</dbReference>
<dbReference type="GO" id="GO:0006693">
    <property type="term" value="P:prostaglandin metabolic process"/>
    <property type="evidence" value="ECO:0000250"/>
    <property type="project" value="UniProtKB"/>
</dbReference>
<dbReference type="CDD" id="cd03209">
    <property type="entry name" value="GST_C_Mu"/>
    <property type="match status" value="1"/>
</dbReference>
<dbReference type="CDD" id="cd03075">
    <property type="entry name" value="GST_N_Mu"/>
    <property type="match status" value="1"/>
</dbReference>
<dbReference type="FunFam" id="1.20.1050.10:FF:000083">
    <property type="entry name" value="Glutathione S-transferase Mu 1"/>
    <property type="match status" value="1"/>
</dbReference>
<dbReference type="FunFam" id="3.40.30.10:FF:000603">
    <property type="entry name" value="Glutathione S-transferase Mu 1"/>
    <property type="match status" value="1"/>
</dbReference>
<dbReference type="Gene3D" id="1.20.1050.10">
    <property type="match status" value="1"/>
</dbReference>
<dbReference type="Gene3D" id="3.40.30.10">
    <property type="entry name" value="Glutaredoxin"/>
    <property type="match status" value="1"/>
</dbReference>
<dbReference type="InterPro" id="IPR010987">
    <property type="entry name" value="Glutathione-S-Trfase_C-like"/>
</dbReference>
<dbReference type="InterPro" id="IPR036282">
    <property type="entry name" value="Glutathione-S-Trfase_C_sf"/>
</dbReference>
<dbReference type="InterPro" id="IPR040079">
    <property type="entry name" value="Glutathione_S-Trfase"/>
</dbReference>
<dbReference type="InterPro" id="IPR004045">
    <property type="entry name" value="Glutathione_S-Trfase_N"/>
</dbReference>
<dbReference type="InterPro" id="IPR004046">
    <property type="entry name" value="GST_C"/>
</dbReference>
<dbReference type="InterPro" id="IPR003081">
    <property type="entry name" value="GST_mu"/>
</dbReference>
<dbReference type="InterPro" id="IPR050213">
    <property type="entry name" value="GST_superfamily"/>
</dbReference>
<dbReference type="InterPro" id="IPR036249">
    <property type="entry name" value="Thioredoxin-like_sf"/>
</dbReference>
<dbReference type="PANTHER" id="PTHR11571">
    <property type="entry name" value="GLUTATHIONE S-TRANSFERASE"/>
    <property type="match status" value="1"/>
</dbReference>
<dbReference type="PANTHER" id="PTHR11571:SF126">
    <property type="entry name" value="GLUTATHIONE S-TRANSFERASE MU 1-RELATED"/>
    <property type="match status" value="1"/>
</dbReference>
<dbReference type="Pfam" id="PF00043">
    <property type="entry name" value="GST_C"/>
    <property type="match status" value="1"/>
</dbReference>
<dbReference type="Pfam" id="PF02798">
    <property type="entry name" value="GST_N"/>
    <property type="match status" value="1"/>
</dbReference>
<dbReference type="PRINTS" id="PR01267">
    <property type="entry name" value="GSTRNSFRASEM"/>
</dbReference>
<dbReference type="SFLD" id="SFLDG01205">
    <property type="entry name" value="AMPS.1"/>
    <property type="match status" value="1"/>
</dbReference>
<dbReference type="SFLD" id="SFLDS00019">
    <property type="entry name" value="Glutathione_Transferase_(cytos"/>
    <property type="match status" value="1"/>
</dbReference>
<dbReference type="SUPFAM" id="SSF47616">
    <property type="entry name" value="GST C-terminal domain-like"/>
    <property type="match status" value="1"/>
</dbReference>
<dbReference type="SUPFAM" id="SSF52833">
    <property type="entry name" value="Thioredoxin-like"/>
    <property type="match status" value="1"/>
</dbReference>
<dbReference type="PROSITE" id="PS50405">
    <property type="entry name" value="GST_CTER"/>
    <property type="match status" value="1"/>
</dbReference>
<dbReference type="PROSITE" id="PS50404">
    <property type="entry name" value="GST_NTER"/>
    <property type="match status" value="1"/>
</dbReference>
<accession>P10649</accession>
<accession>A2AE90</accession>
<accession>Q58ET5</accession>
<sequence length="218" mass="25970">MPMILGYWNVRGLTHPIRMLLEYTDSSYDEKRYTMGDAPDFDRSQWLNEKFKLGLDFPNLPYLIDGSHKITQSNAILRYLARKHHLDGETEEERIRADIVENQVMDTRMQLIMLCYNPDFEKQKPEFLKTIPEKMKLYSEFLGKRPWFAGDKVTYVDFLAYDILDQYRMFEPKCLDAFPNLRDFLARFEGLKKISAYMKSSRYIATPIFSKMAHWSNK</sequence>
<reference key="1">
    <citation type="journal article" date="1988" name="J. Biol. Chem.">
        <title>Tissue-specific induction of murine glutathione transferase mRNAs by butylated hydroxyanisole.</title>
        <authorList>
            <person name="Pearson W.R."/>
            <person name="Reinhart J."/>
            <person name="Sisk S.C."/>
            <person name="Anderson K.S."/>
            <person name="Adler P.N."/>
        </authorList>
    </citation>
    <scope>NUCLEOTIDE SEQUENCE [MRNA]</scope>
</reference>
<reference key="2">
    <citation type="journal article" date="1989" name="J. Biol. Chem.">
        <title>Isolation, characterization, and expression in Escherichia coli of two murine Mu class glutathione S-transferase cDNAs homologous to the rat subunits 3 (Yb1) and 4 (Yb2).</title>
        <authorList>
            <person name="Townsend A.J."/>
            <person name="Goldsmith M.E."/>
            <person name="Pickett C.B."/>
            <person name="Cowan K.H."/>
        </authorList>
    </citation>
    <scope>NUCLEOTIDE SEQUENCE [MRNA]</scope>
</reference>
<reference key="3">
    <citation type="journal article" date="1993" name="Arch. Biochem. Biophys.">
        <title>The structure of two murine class-mu glutathione transferase genes coordinately induced by butylated hydroxyanisole.</title>
        <authorList>
            <person name="Reinhart J."/>
            <person name="Pearson W.R."/>
        </authorList>
    </citation>
    <scope>NUCLEOTIDE SEQUENCE [GENOMIC DNA]</scope>
</reference>
<reference key="4">
    <citation type="journal article" date="2009" name="PLoS Biol.">
        <title>Lineage-specific biology revealed by a finished genome assembly of the mouse.</title>
        <authorList>
            <person name="Church D.M."/>
            <person name="Goodstadt L."/>
            <person name="Hillier L.W."/>
            <person name="Zody M.C."/>
            <person name="Goldstein S."/>
            <person name="She X."/>
            <person name="Bult C.J."/>
            <person name="Agarwala R."/>
            <person name="Cherry J.L."/>
            <person name="DiCuccio M."/>
            <person name="Hlavina W."/>
            <person name="Kapustin Y."/>
            <person name="Meric P."/>
            <person name="Maglott D."/>
            <person name="Birtle Z."/>
            <person name="Marques A.C."/>
            <person name="Graves T."/>
            <person name="Zhou S."/>
            <person name="Teague B."/>
            <person name="Potamousis K."/>
            <person name="Churas C."/>
            <person name="Place M."/>
            <person name="Herschleb J."/>
            <person name="Runnheim R."/>
            <person name="Forrest D."/>
            <person name="Amos-Landgraf J."/>
            <person name="Schwartz D.C."/>
            <person name="Cheng Z."/>
            <person name="Lindblad-Toh K."/>
            <person name="Eichler E.E."/>
            <person name="Ponting C.P."/>
        </authorList>
    </citation>
    <scope>NUCLEOTIDE SEQUENCE [LARGE SCALE GENOMIC DNA]</scope>
    <source>
        <strain>C57BL/6J</strain>
    </source>
</reference>
<reference key="5">
    <citation type="journal article" date="2004" name="Genome Res.">
        <title>The status, quality, and expansion of the NIH full-length cDNA project: the Mammalian Gene Collection (MGC).</title>
        <authorList>
            <consortium name="The MGC Project Team"/>
        </authorList>
    </citation>
    <scope>NUCLEOTIDE SEQUENCE [LARGE SCALE MRNA]</scope>
    <source>
        <strain>C57BL/6J</strain>
        <strain>FVB/N</strain>
        <tissue>Brain</tissue>
        <tissue>Liver</tissue>
    </source>
</reference>
<reference key="6">
    <citation type="journal article" date="1983" name="J. Biol. Chem.">
        <title>Increased synthesis of glutathione S-transferases in response to anticarcinogenic antioxidants. Cloning and measurement of messenger RNA.</title>
        <authorList>
            <person name="Pearson W.R."/>
            <person name="Windle J.J."/>
            <person name="Morrow J.F."/>
            <person name="Benson A.M."/>
            <person name="Talalay P."/>
        </authorList>
    </citation>
    <scope>PRELIMINARY PROTEIN SEQUENCE OF 2-41</scope>
</reference>
<reference key="7">
    <citation type="journal article" date="1985" name="Proc. Natl. Acad. Sci. U.S.A.">
        <title>Identification of three classes of cytosolic glutathione transferase common to several mammalian species: correlation between structural data and enzymatic properties.</title>
        <authorList>
            <person name="Mannervik B."/>
            <person name="Alin P."/>
            <person name="Guthenberg C."/>
            <person name="Jensson H."/>
            <person name="Tahir M.K."/>
            <person name="Warholm M."/>
            <person name="Joernvall H."/>
        </authorList>
    </citation>
    <scope>PRELIMINARY PROTEIN SEQUENCE OF 2-25</scope>
</reference>
<reference key="8">
    <citation type="submission" date="2009-01" db="UniProtKB">
        <authorList>
            <person name="Lubec G."/>
            <person name="Kang S.U."/>
            <person name="Klug S."/>
            <person name="Sunyer B."/>
            <person name="Chen W.-Q."/>
        </authorList>
    </citation>
    <scope>PROTEIN SEQUENCE OF 2-11; 19-31; 33-43; 53-78; 97-108; 137-144; 153-168; 174-192 AND 203-211</scope>
    <scope>IDENTIFICATION BY MASS SPECTROMETRY</scope>
    <source>
        <strain>C57BL/6J</strain>
        <strain>OF1</strain>
        <tissue>Brain</tissue>
        <tissue>Hippocampus</tissue>
    </source>
</reference>
<reference key="9">
    <citation type="journal article" date="1995" name="Chem. Res. Toxicol.">
        <title>Purification, mass spectrometric characterization, and covalent modification of murine glutathione S-transferases.</title>
        <authorList>
            <person name="Mitchell A.E."/>
            <person name="Morin D."/>
            <person name="Lame M.W."/>
            <person name="Jones A.D."/>
        </authorList>
    </citation>
    <scope>CHARACTERIZATION</scope>
    <scope>MASS SPECTROMETRY</scope>
    <source>
        <strain>CD-1</strain>
        <tissue>Liver</tissue>
    </source>
</reference>
<reference key="10">
    <citation type="journal article" date="2010" name="Cell">
        <title>A tissue-specific atlas of mouse protein phosphorylation and expression.</title>
        <authorList>
            <person name="Huttlin E.L."/>
            <person name="Jedrychowski M.P."/>
            <person name="Elias J.E."/>
            <person name="Goswami T."/>
            <person name="Rad R."/>
            <person name="Beausoleil S.A."/>
            <person name="Villen J."/>
            <person name="Haas W."/>
            <person name="Sowa M.E."/>
            <person name="Gygi S.P."/>
        </authorList>
    </citation>
    <scope>PHOSPHORYLATION [LARGE SCALE ANALYSIS] AT THR-34</scope>
    <scope>IDENTIFICATION BY MASS SPECTROMETRY [LARGE SCALE ANALYSIS]</scope>
    <source>
        <tissue>Brain</tissue>
        <tissue>Brown adipose tissue</tissue>
        <tissue>Heart</tissue>
        <tissue>Kidney</tissue>
        <tissue>Liver</tissue>
        <tissue>Lung</tissue>
        <tissue>Pancreas</tissue>
        <tissue>Spleen</tissue>
        <tissue>Testis</tissue>
    </source>
</reference>
<comment type="function">
    <text evidence="3">Conjugation of reduced glutathione to a wide number of exogenous and endogenous hydrophobic electrophiles. Involved in the formation of glutathione conjugates of both prostaglandin A2 (PGA2) and prostaglandin J2 (PGJ2). Participates in the formation of novel hepoxilin regioisomers.</text>
</comment>
<comment type="catalytic activity">
    <reaction evidence="3">
        <text>RX + glutathione = an S-substituted glutathione + a halide anion + H(+)</text>
        <dbReference type="Rhea" id="RHEA:16437"/>
        <dbReference type="ChEBI" id="CHEBI:15378"/>
        <dbReference type="ChEBI" id="CHEBI:16042"/>
        <dbReference type="ChEBI" id="CHEBI:17792"/>
        <dbReference type="ChEBI" id="CHEBI:57925"/>
        <dbReference type="ChEBI" id="CHEBI:90779"/>
        <dbReference type="EC" id="2.5.1.18"/>
    </reaction>
    <physiologicalReaction direction="left-to-right" evidence="3">
        <dbReference type="Rhea" id="RHEA:16438"/>
    </physiologicalReaction>
</comment>
<comment type="catalytic activity">
    <reaction evidence="3">
        <text>prostaglandin A2 + glutathione = prostaglandin A2-S-(R)-glutathione</text>
        <dbReference type="Rhea" id="RHEA:50796"/>
        <dbReference type="ChEBI" id="CHEBI:57925"/>
        <dbReference type="ChEBI" id="CHEBI:133370"/>
        <dbReference type="ChEBI" id="CHEBI:133768"/>
    </reaction>
    <physiologicalReaction direction="left-to-right" evidence="3">
        <dbReference type="Rhea" id="RHEA:50797"/>
    </physiologicalReaction>
</comment>
<comment type="catalytic activity">
    <reaction evidence="3">
        <text>prostaglandin J2 + glutathione = prostaglandin J2-S-(R)-glutathione</text>
        <dbReference type="Rhea" id="RHEA:50804"/>
        <dbReference type="ChEBI" id="CHEBI:57925"/>
        <dbReference type="ChEBI" id="CHEBI:133396"/>
        <dbReference type="ChEBI" id="CHEBI:133771"/>
    </reaction>
    <physiologicalReaction direction="left-to-right" evidence="3">
        <dbReference type="Rhea" id="RHEA:50805"/>
    </physiologicalReaction>
</comment>
<comment type="catalytic activity">
    <reaction evidence="3">
        <text>prostaglandin J2 + glutathione = prostaglandin J2-S-(S)-glutathione</text>
        <dbReference type="Rhea" id="RHEA:50808"/>
        <dbReference type="ChEBI" id="CHEBI:57925"/>
        <dbReference type="ChEBI" id="CHEBI:133396"/>
        <dbReference type="ChEBI" id="CHEBI:133772"/>
    </reaction>
    <physiologicalReaction direction="left-to-right" evidence="3">
        <dbReference type="Rhea" id="RHEA:50809"/>
    </physiologicalReaction>
</comment>
<comment type="catalytic activity">
    <reaction evidence="3">
        <text>prostaglandin A2 + glutathione = prostaglandin A2-S-(S)-glutathione</text>
        <dbReference type="Rhea" id="RHEA:50800"/>
        <dbReference type="ChEBI" id="CHEBI:57925"/>
        <dbReference type="ChEBI" id="CHEBI:133370"/>
        <dbReference type="ChEBI" id="CHEBI:133769"/>
    </reaction>
    <physiologicalReaction direction="left-to-right" evidence="3">
        <dbReference type="Rhea" id="RHEA:50801"/>
    </physiologicalReaction>
</comment>
<comment type="catalytic activity">
    <reaction evidence="3">
        <text>11(S)-hydroxy-14(S),15(S)-epoxy-(5Z,8Z,12E)-eicosatrienoate + glutathione = (11S,15S)-dihydroxy-14(R)-S-glutathionyl-(5Z,8Z,12E)-eicosatrienoate</text>
        <dbReference type="Rhea" id="RHEA:50260"/>
        <dbReference type="ChEBI" id="CHEBI:57925"/>
        <dbReference type="ChEBI" id="CHEBI:132200"/>
        <dbReference type="ChEBI" id="CHEBI:132201"/>
    </reaction>
    <physiologicalReaction direction="left-to-right" evidence="3">
        <dbReference type="Rhea" id="RHEA:50261"/>
    </physiologicalReaction>
</comment>
<comment type="subunit">
    <text>Homodimer.</text>
</comment>
<comment type="subcellular location">
    <subcellularLocation>
        <location>Cytoplasm</location>
    </subcellularLocation>
</comment>
<comment type="mass spectrometry" mass="25838.4" error="2.0" method="Electrospray" evidence="4"/>
<comment type="similarity">
    <text evidence="6">Belongs to the GST superfamily. Mu family.</text>
</comment>
<name>GSTM1_MOUSE</name>
<proteinExistence type="evidence at protein level"/>
<keyword id="KW-0963">Cytoplasm</keyword>
<keyword id="KW-0903">Direct protein sequencing</keyword>
<keyword id="KW-0443">Lipid metabolism</keyword>
<keyword id="KW-0597">Phosphoprotein</keyword>
<keyword id="KW-1185">Reference proteome</keyword>
<keyword id="KW-0808">Transferase</keyword>